<evidence type="ECO:0000255" key="1"/>
<evidence type="ECO:0000255" key="2">
    <source>
        <dbReference type="PROSITE-ProRule" id="PRU00316"/>
    </source>
</evidence>
<evidence type="ECO:0000305" key="3"/>
<gene>
    <name type="primary">Lrrn4cl</name>
</gene>
<feature type="signal peptide" evidence="1">
    <location>
        <begin position="1"/>
        <end position="19"/>
    </location>
</feature>
<feature type="chain" id="PRO_0000317753" description="LRRN4 C-terminal-like protein">
    <location>
        <begin position="20"/>
        <end position="239"/>
    </location>
</feature>
<feature type="topological domain" description="Extracellular" evidence="1">
    <location>
        <begin position="20"/>
        <end position="194"/>
    </location>
</feature>
<feature type="transmembrane region" description="Helical" evidence="1">
    <location>
        <begin position="195"/>
        <end position="215"/>
    </location>
</feature>
<feature type="topological domain" description="Cytoplasmic" evidence="1">
    <location>
        <begin position="216"/>
        <end position="239"/>
    </location>
</feature>
<feature type="domain" description="Fibronectin type-III" evidence="2">
    <location>
        <begin position="82"/>
        <end position="179"/>
    </location>
</feature>
<feature type="glycosylation site" description="N-linked (GlcNAc...) asparagine" evidence="1">
    <location>
        <position position="132"/>
    </location>
</feature>
<feature type="glycosylation site" description="N-linked (GlcNAc...) asparagine" evidence="1">
    <location>
        <position position="174"/>
    </location>
</feature>
<organism>
    <name type="scientific">Mus musculus</name>
    <name type="common">Mouse</name>
    <dbReference type="NCBI Taxonomy" id="10090"/>
    <lineage>
        <taxon>Eukaryota</taxon>
        <taxon>Metazoa</taxon>
        <taxon>Chordata</taxon>
        <taxon>Craniata</taxon>
        <taxon>Vertebrata</taxon>
        <taxon>Euteleostomi</taxon>
        <taxon>Mammalia</taxon>
        <taxon>Eutheria</taxon>
        <taxon>Euarchontoglires</taxon>
        <taxon>Glires</taxon>
        <taxon>Rodentia</taxon>
        <taxon>Myomorpha</taxon>
        <taxon>Muroidea</taxon>
        <taxon>Muridae</taxon>
        <taxon>Murinae</taxon>
        <taxon>Mus</taxon>
        <taxon>Mus</taxon>
    </lineage>
</organism>
<keyword id="KW-0325">Glycoprotein</keyword>
<keyword id="KW-0472">Membrane</keyword>
<keyword id="KW-1185">Reference proteome</keyword>
<keyword id="KW-0732">Signal</keyword>
<keyword id="KW-0812">Transmembrane</keyword>
<keyword id="KW-1133">Transmembrane helix</keyword>
<sequence length="239" mass="25931">MLGSLSLLWLAAMTTSLVSQPQILTLEDYQEGEEDDVTVATPSLAVRCDYDRCRHLQVSCQELQKVGPVACLCPGLSREDQQPEPPRLGEVQIMAEEGYAVVHWCAPFSPVSHYWLLLWESNGAPQKSAPLNATVRRAELKGLKPGVAYVLCVVAANDAGESNVPGAEVEGPENWTGPSFGPCRKFIMPPKPVTLVYAAVGVGTALALLSCAALVWHFCLRERWGCPRRQGMAQASEAL</sequence>
<name>LRN4L_MOUSE</name>
<dbReference type="EMBL" id="AK158268">
    <property type="protein sequence ID" value="BAE34439.1"/>
    <property type="molecule type" value="mRNA"/>
</dbReference>
<dbReference type="EMBL" id="BC107244">
    <property type="protein sequence ID" value="AAI07245.1"/>
    <property type="molecule type" value="mRNA"/>
</dbReference>
<dbReference type="EMBL" id="BC107245">
    <property type="protein sequence ID" value="AAI07246.1"/>
    <property type="molecule type" value="mRNA"/>
</dbReference>
<dbReference type="CCDS" id="CCDS37909.1"/>
<dbReference type="RefSeq" id="NP_001013037.1">
    <property type="nucleotide sequence ID" value="NM_001013019.3"/>
</dbReference>
<dbReference type="RefSeq" id="NP_001347557.1">
    <property type="nucleotide sequence ID" value="NM_001360628.1"/>
</dbReference>
<dbReference type="RefSeq" id="XP_006527384.1">
    <property type="nucleotide sequence ID" value="XM_006527321.2"/>
</dbReference>
<dbReference type="SMR" id="Q3TYX2"/>
<dbReference type="BioGRID" id="213084">
    <property type="interactions" value="1"/>
</dbReference>
<dbReference type="FunCoup" id="Q3TYX2">
    <property type="interactions" value="13"/>
</dbReference>
<dbReference type="STRING" id="10090.ENSMUSP00000093976"/>
<dbReference type="GlyCosmos" id="Q3TYX2">
    <property type="glycosylation" value="2 sites, No reported glycans"/>
</dbReference>
<dbReference type="GlyGen" id="Q3TYX2">
    <property type="glycosylation" value="2 sites, 1 N-linked glycan (1 site)"/>
</dbReference>
<dbReference type="PhosphoSitePlus" id="Q3TYX2"/>
<dbReference type="SwissPalm" id="Q3TYX2"/>
<dbReference type="PaxDb" id="10090-ENSMUSP00000093976"/>
<dbReference type="ProteomicsDB" id="252523"/>
<dbReference type="Antibodypedia" id="28669">
    <property type="antibodies" value="88 antibodies from 18 providers"/>
</dbReference>
<dbReference type="Ensembl" id="ENSMUST00000096257.3">
    <property type="protein sequence ID" value="ENSMUSP00000093976.3"/>
    <property type="gene ID" value="ENSMUSG00000071656.8"/>
</dbReference>
<dbReference type="Ensembl" id="ENSMUST00000235683.2">
    <property type="protein sequence ID" value="ENSMUSP00000157980.2"/>
    <property type="gene ID" value="ENSMUSG00000071656.8"/>
</dbReference>
<dbReference type="GeneID" id="68852"/>
<dbReference type="KEGG" id="mmu:68852"/>
<dbReference type="UCSC" id="uc008gnm.1">
    <property type="organism name" value="mouse"/>
</dbReference>
<dbReference type="AGR" id="MGI:1916102"/>
<dbReference type="CTD" id="221091"/>
<dbReference type="MGI" id="MGI:1916102">
    <property type="gene designation" value="Lrrn4cl"/>
</dbReference>
<dbReference type="VEuPathDB" id="HostDB:ENSMUSG00000071656"/>
<dbReference type="eggNOG" id="ENOG502S4YI">
    <property type="taxonomic scope" value="Eukaryota"/>
</dbReference>
<dbReference type="GeneTree" id="ENSGT00940000162696"/>
<dbReference type="HOGENOM" id="CLU_093350_0_0_1"/>
<dbReference type="InParanoid" id="Q3TYX2"/>
<dbReference type="OMA" id="SCSALVW"/>
<dbReference type="OrthoDB" id="8824963at2759"/>
<dbReference type="PhylomeDB" id="Q3TYX2"/>
<dbReference type="BioGRID-ORCS" id="68852">
    <property type="hits" value="3 hits in 78 CRISPR screens"/>
</dbReference>
<dbReference type="ChiTaRS" id="Lrrn4cl">
    <property type="organism name" value="mouse"/>
</dbReference>
<dbReference type="PRO" id="PR:Q3TYX2"/>
<dbReference type="Proteomes" id="UP000000589">
    <property type="component" value="Chromosome 19"/>
</dbReference>
<dbReference type="RNAct" id="Q3TYX2">
    <property type="molecule type" value="protein"/>
</dbReference>
<dbReference type="Bgee" id="ENSMUSG00000071656">
    <property type="expression patterns" value="Expressed in tarsal region and 91 other cell types or tissues"/>
</dbReference>
<dbReference type="GO" id="GO:0016020">
    <property type="term" value="C:membrane"/>
    <property type="evidence" value="ECO:0007669"/>
    <property type="project" value="UniProtKB-SubCell"/>
</dbReference>
<dbReference type="CDD" id="cd00063">
    <property type="entry name" value="FN3"/>
    <property type="match status" value="1"/>
</dbReference>
<dbReference type="Gene3D" id="2.60.40.10">
    <property type="entry name" value="Immunoglobulins"/>
    <property type="match status" value="1"/>
</dbReference>
<dbReference type="InterPro" id="IPR003961">
    <property type="entry name" value="FN3_dom"/>
</dbReference>
<dbReference type="InterPro" id="IPR036116">
    <property type="entry name" value="FN3_sf"/>
</dbReference>
<dbReference type="InterPro" id="IPR013783">
    <property type="entry name" value="Ig-like_fold"/>
</dbReference>
<dbReference type="Pfam" id="PF00041">
    <property type="entry name" value="fn3"/>
    <property type="match status" value="1"/>
</dbReference>
<dbReference type="SMART" id="SM00060">
    <property type="entry name" value="FN3"/>
    <property type="match status" value="1"/>
</dbReference>
<dbReference type="SUPFAM" id="SSF49265">
    <property type="entry name" value="Fibronectin type III"/>
    <property type="match status" value="1"/>
</dbReference>
<dbReference type="PROSITE" id="PS50853">
    <property type="entry name" value="FN3"/>
    <property type="match status" value="1"/>
</dbReference>
<comment type="subcellular location">
    <subcellularLocation>
        <location evidence="3">Membrane</location>
        <topology evidence="3">Single-pass type I membrane protein</topology>
    </subcellularLocation>
</comment>
<accession>Q3TYX2</accession>
<protein>
    <recommendedName>
        <fullName>LRRN4 C-terminal-like protein</fullName>
    </recommendedName>
</protein>
<proteinExistence type="evidence at transcript level"/>
<reference key="1">
    <citation type="journal article" date="2005" name="Science">
        <title>The transcriptional landscape of the mammalian genome.</title>
        <authorList>
            <person name="Carninci P."/>
            <person name="Kasukawa T."/>
            <person name="Katayama S."/>
            <person name="Gough J."/>
            <person name="Frith M.C."/>
            <person name="Maeda N."/>
            <person name="Oyama R."/>
            <person name="Ravasi T."/>
            <person name="Lenhard B."/>
            <person name="Wells C."/>
            <person name="Kodzius R."/>
            <person name="Shimokawa K."/>
            <person name="Bajic V.B."/>
            <person name="Brenner S.E."/>
            <person name="Batalov S."/>
            <person name="Forrest A.R."/>
            <person name="Zavolan M."/>
            <person name="Davis M.J."/>
            <person name="Wilming L.G."/>
            <person name="Aidinis V."/>
            <person name="Allen J.E."/>
            <person name="Ambesi-Impiombato A."/>
            <person name="Apweiler R."/>
            <person name="Aturaliya R.N."/>
            <person name="Bailey T.L."/>
            <person name="Bansal M."/>
            <person name="Baxter L."/>
            <person name="Beisel K.W."/>
            <person name="Bersano T."/>
            <person name="Bono H."/>
            <person name="Chalk A.M."/>
            <person name="Chiu K.P."/>
            <person name="Choudhary V."/>
            <person name="Christoffels A."/>
            <person name="Clutterbuck D.R."/>
            <person name="Crowe M.L."/>
            <person name="Dalla E."/>
            <person name="Dalrymple B.P."/>
            <person name="de Bono B."/>
            <person name="Della Gatta G."/>
            <person name="di Bernardo D."/>
            <person name="Down T."/>
            <person name="Engstrom P."/>
            <person name="Fagiolini M."/>
            <person name="Faulkner G."/>
            <person name="Fletcher C.F."/>
            <person name="Fukushima T."/>
            <person name="Furuno M."/>
            <person name="Futaki S."/>
            <person name="Gariboldi M."/>
            <person name="Georgii-Hemming P."/>
            <person name="Gingeras T.R."/>
            <person name="Gojobori T."/>
            <person name="Green R.E."/>
            <person name="Gustincich S."/>
            <person name="Harbers M."/>
            <person name="Hayashi Y."/>
            <person name="Hensch T.K."/>
            <person name="Hirokawa N."/>
            <person name="Hill D."/>
            <person name="Huminiecki L."/>
            <person name="Iacono M."/>
            <person name="Ikeo K."/>
            <person name="Iwama A."/>
            <person name="Ishikawa T."/>
            <person name="Jakt M."/>
            <person name="Kanapin A."/>
            <person name="Katoh M."/>
            <person name="Kawasawa Y."/>
            <person name="Kelso J."/>
            <person name="Kitamura H."/>
            <person name="Kitano H."/>
            <person name="Kollias G."/>
            <person name="Krishnan S.P."/>
            <person name="Kruger A."/>
            <person name="Kummerfeld S.K."/>
            <person name="Kurochkin I.V."/>
            <person name="Lareau L.F."/>
            <person name="Lazarevic D."/>
            <person name="Lipovich L."/>
            <person name="Liu J."/>
            <person name="Liuni S."/>
            <person name="McWilliam S."/>
            <person name="Madan Babu M."/>
            <person name="Madera M."/>
            <person name="Marchionni L."/>
            <person name="Matsuda H."/>
            <person name="Matsuzawa S."/>
            <person name="Miki H."/>
            <person name="Mignone F."/>
            <person name="Miyake S."/>
            <person name="Morris K."/>
            <person name="Mottagui-Tabar S."/>
            <person name="Mulder N."/>
            <person name="Nakano N."/>
            <person name="Nakauchi H."/>
            <person name="Ng P."/>
            <person name="Nilsson R."/>
            <person name="Nishiguchi S."/>
            <person name="Nishikawa S."/>
            <person name="Nori F."/>
            <person name="Ohara O."/>
            <person name="Okazaki Y."/>
            <person name="Orlando V."/>
            <person name="Pang K.C."/>
            <person name="Pavan W.J."/>
            <person name="Pavesi G."/>
            <person name="Pesole G."/>
            <person name="Petrovsky N."/>
            <person name="Piazza S."/>
            <person name="Reed J."/>
            <person name="Reid J.F."/>
            <person name="Ring B.Z."/>
            <person name="Ringwald M."/>
            <person name="Rost B."/>
            <person name="Ruan Y."/>
            <person name="Salzberg S.L."/>
            <person name="Sandelin A."/>
            <person name="Schneider C."/>
            <person name="Schoenbach C."/>
            <person name="Sekiguchi K."/>
            <person name="Semple C.A."/>
            <person name="Seno S."/>
            <person name="Sessa L."/>
            <person name="Sheng Y."/>
            <person name="Shibata Y."/>
            <person name="Shimada H."/>
            <person name="Shimada K."/>
            <person name="Silva D."/>
            <person name="Sinclair B."/>
            <person name="Sperling S."/>
            <person name="Stupka E."/>
            <person name="Sugiura K."/>
            <person name="Sultana R."/>
            <person name="Takenaka Y."/>
            <person name="Taki K."/>
            <person name="Tammoja K."/>
            <person name="Tan S.L."/>
            <person name="Tang S."/>
            <person name="Taylor M.S."/>
            <person name="Tegner J."/>
            <person name="Teichmann S.A."/>
            <person name="Ueda H.R."/>
            <person name="van Nimwegen E."/>
            <person name="Verardo R."/>
            <person name="Wei C.L."/>
            <person name="Yagi K."/>
            <person name="Yamanishi H."/>
            <person name="Zabarovsky E."/>
            <person name="Zhu S."/>
            <person name="Zimmer A."/>
            <person name="Hide W."/>
            <person name="Bult C."/>
            <person name="Grimmond S.M."/>
            <person name="Teasdale R.D."/>
            <person name="Liu E.T."/>
            <person name="Brusic V."/>
            <person name="Quackenbush J."/>
            <person name="Wahlestedt C."/>
            <person name="Mattick J.S."/>
            <person name="Hume D.A."/>
            <person name="Kai C."/>
            <person name="Sasaki D."/>
            <person name="Tomaru Y."/>
            <person name="Fukuda S."/>
            <person name="Kanamori-Katayama M."/>
            <person name="Suzuki M."/>
            <person name="Aoki J."/>
            <person name="Arakawa T."/>
            <person name="Iida J."/>
            <person name="Imamura K."/>
            <person name="Itoh M."/>
            <person name="Kato T."/>
            <person name="Kawaji H."/>
            <person name="Kawagashira N."/>
            <person name="Kawashima T."/>
            <person name="Kojima M."/>
            <person name="Kondo S."/>
            <person name="Konno H."/>
            <person name="Nakano K."/>
            <person name="Ninomiya N."/>
            <person name="Nishio T."/>
            <person name="Okada M."/>
            <person name="Plessy C."/>
            <person name="Shibata K."/>
            <person name="Shiraki T."/>
            <person name="Suzuki S."/>
            <person name="Tagami M."/>
            <person name="Waki K."/>
            <person name="Watahiki A."/>
            <person name="Okamura-Oho Y."/>
            <person name="Suzuki H."/>
            <person name="Kawai J."/>
            <person name="Hayashizaki Y."/>
        </authorList>
    </citation>
    <scope>NUCLEOTIDE SEQUENCE [LARGE SCALE MRNA]</scope>
    <source>
        <strain>C57BL/6J</strain>
        <tissue>Inner ear</tissue>
    </source>
</reference>
<reference key="2">
    <citation type="journal article" date="2004" name="Genome Res.">
        <title>The status, quality, and expansion of the NIH full-length cDNA project: the Mammalian Gene Collection (MGC).</title>
        <authorList>
            <consortium name="The MGC Project Team"/>
        </authorList>
    </citation>
    <scope>NUCLEOTIDE SEQUENCE [LARGE SCALE MRNA]</scope>
</reference>